<organism>
    <name type="scientific">Mycoplasma pneumoniae (strain ATCC 29342 / M129 / Subtype 1)</name>
    <name type="common">Mycoplasmoides pneumoniae</name>
    <dbReference type="NCBI Taxonomy" id="272634"/>
    <lineage>
        <taxon>Bacteria</taxon>
        <taxon>Bacillati</taxon>
        <taxon>Mycoplasmatota</taxon>
        <taxon>Mycoplasmoidales</taxon>
        <taxon>Mycoplasmoidaceae</taxon>
        <taxon>Mycoplasmoides</taxon>
    </lineage>
</organism>
<name>Y613_MYCPN</name>
<accession>P75182</accession>
<gene>
    <name type="ordered locus">MPN_613</name>
    <name type="ORF">C12_orf344</name>
    <name type="ORF">MP229</name>
</gene>
<feature type="chain" id="PRO_0000210601" description="Uncharacterized protein MG415 homolog">
    <location>
        <begin position="1"/>
        <end position="344"/>
    </location>
</feature>
<proteinExistence type="inferred from homology"/>
<sequence>MVFSFQDDTALTVALNSIKLVKNPEELIPGLIPTNPKTGIFYIAAEITNSNNFFKWGTDSNREIIKGQMYFLKKETKIPTIRTYLFQMRTHKIALNANDVWFQANNDKVKVIVDGIELDQFDPKLPNVAFFNDYQVDLVSTLTLADKQLLIRRLNLALVGMNLMVDEQATNIETFPKQIRLTTKSIDQSFDFDVEFNPKASELNVIVKVDEQPLFKLDYELVIKNSNTLQLVNRNKHLGMYIWSVADQRYQAKLLDTLQLFLQSKQMYLKEKIPLKLQDNTATFKIAKQAQPNNGENKNTNFIGYLVIAASSLFLVVVAFSFYFYKRKKNLKSHKQKAVVKTDK</sequence>
<evidence type="ECO:0000305" key="1"/>
<keyword id="KW-1185">Reference proteome</keyword>
<comment type="similarity">
    <text evidence="1">Belongs to the MG414/MG415 family.</text>
</comment>
<reference key="1">
    <citation type="journal article" date="1996" name="Nucleic Acids Res.">
        <title>Complete sequence analysis of the genome of the bacterium Mycoplasma pneumoniae.</title>
        <authorList>
            <person name="Himmelreich R."/>
            <person name="Hilbert H."/>
            <person name="Plagens H."/>
            <person name="Pirkl E."/>
            <person name="Li B.-C."/>
            <person name="Herrmann R."/>
        </authorList>
    </citation>
    <scope>NUCLEOTIDE SEQUENCE [LARGE SCALE GENOMIC DNA]</scope>
    <source>
        <strain>ATCC 29342 / M129 / Subtype 1</strain>
    </source>
</reference>
<protein>
    <recommendedName>
        <fullName>Uncharacterized protein MG415 homolog</fullName>
    </recommendedName>
</protein>
<dbReference type="EMBL" id="U00089">
    <property type="protein sequence ID" value="AAB95877.1"/>
    <property type="molecule type" value="Genomic_DNA"/>
</dbReference>
<dbReference type="PIR" id="S73555">
    <property type="entry name" value="S73555"/>
</dbReference>
<dbReference type="RefSeq" id="NP_110302.1">
    <property type="nucleotide sequence ID" value="NC_000912.1"/>
</dbReference>
<dbReference type="RefSeq" id="WP_010874970.1">
    <property type="nucleotide sequence ID" value="NC_000912.1"/>
</dbReference>
<dbReference type="STRING" id="272634.MPN_613"/>
<dbReference type="EnsemblBacteria" id="AAB95877">
    <property type="protein sequence ID" value="AAB95877"/>
    <property type="gene ID" value="MPN_613"/>
</dbReference>
<dbReference type="KEGG" id="mpn:MPN_613"/>
<dbReference type="PATRIC" id="fig|272634.6.peg.677"/>
<dbReference type="HOGENOM" id="CLU_1007689_0_0_14"/>
<dbReference type="OrthoDB" id="10008859at2"/>
<dbReference type="BioCyc" id="MPNE272634:G1GJ3-989-MONOMER"/>
<dbReference type="Proteomes" id="UP000000808">
    <property type="component" value="Chromosome"/>
</dbReference>